<gene>
    <name evidence="2" type="primary">secA</name>
    <name type="ordered locus">COSY_0014</name>
</gene>
<protein>
    <recommendedName>
        <fullName evidence="2">Protein translocase subunit SecA</fullName>
        <ecNumber evidence="2">7.4.2.8</ecNumber>
    </recommendedName>
</protein>
<keyword id="KW-0067">ATP-binding</keyword>
<keyword id="KW-0997">Cell inner membrane</keyword>
<keyword id="KW-1003">Cell membrane</keyword>
<keyword id="KW-0963">Cytoplasm</keyword>
<keyword id="KW-0472">Membrane</keyword>
<keyword id="KW-0479">Metal-binding</keyword>
<keyword id="KW-0547">Nucleotide-binding</keyword>
<keyword id="KW-0653">Protein transport</keyword>
<keyword id="KW-1185">Reference proteome</keyword>
<keyword id="KW-1278">Translocase</keyword>
<keyword id="KW-0811">Translocation</keyword>
<keyword id="KW-0813">Transport</keyword>
<keyword id="KW-0862">Zinc</keyword>
<evidence type="ECO:0000250" key="1"/>
<evidence type="ECO:0000255" key="2">
    <source>
        <dbReference type="HAMAP-Rule" id="MF_01382"/>
    </source>
</evidence>
<evidence type="ECO:0000256" key="3">
    <source>
        <dbReference type="SAM" id="MobiDB-lite"/>
    </source>
</evidence>
<evidence type="ECO:0000305" key="4"/>
<proteinExistence type="inferred from homology"/>
<organism>
    <name type="scientific">Vesicomyosocius okutanii subsp. Calyptogena okutanii (strain HA)</name>
    <dbReference type="NCBI Taxonomy" id="412965"/>
    <lineage>
        <taxon>Bacteria</taxon>
        <taxon>Pseudomonadati</taxon>
        <taxon>Pseudomonadota</taxon>
        <taxon>Gammaproteobacteria</taxon>
        <taxon>Candidatus Pseudothioglobaceae</taxon>
        <taxon>Candidatus Vesicomyosocius</taxon>
    </lineage>
</organism>
<accession>A5CY18</accession>
<reference key="1">
    <citation type="journal article" date="2007" name="Curr. Biol.">
        <title>Reduced genome of the thioautotrophic intracellular symbiont in a deep-sea clam, Calyptogena okutanii.</title>
        <authorList>
            <person name="Kuwahara H."/>
            <person name="Yoshida T."/>
            <person name="Takaki Y."/>
            <person name="Shimamura S."/>
            <person name="Nishi S."/>
            <person name="Harada M."/>
            <person name="Matsuyama K."/>
            <person name="Takishita K."/>
            <person name="Kawato M."/>
            <person name="Uematsu K."/>
            <person name="Fujiwara Y."/>
            <person name="Sato T."/>
            <person name="Kato C."/>
            <person name="Kitagawa M."/>
            <person name="Kato I."/>
            <person name="Maruyama T."/>
        </authorList>
    </citation>
    <scope>NUCLEOTIDE SEQUENCE [LARGE SCALE GENOMIC DNA]</scope>
    <source>
        <strain>HA</strain>
    </source>
</reference>
<dbReference type="EC" id="7.4.2.8" evidence="2"/>
<dbReference type="EMBL" id="AP009247">
    <property type="protein sequence ID" value="BAF61153.1"/>
    <property type="molecule type" value="Genomic_DNA"/>
</dbReference>
<dbReference type="RefSeq" id="WP_011929423.1">
    <property type="nucleotide sequence ID" value="NC_009465.1"/>
</dbReference>
<dbReference type="SMR" id="A5CY18"/>
<dbReference type="STRING" id="412965.COSY_0014"/>
<dbReference type="KEGG" id="vok:COSY_0014"/>
<dbReference type="eggNOG" id="COG0653">
    <property type="taxonomic scope" value="Bacteria"/>
</dbReference>
<dbReference type="HOGENOM" id="CLU_005314_3_0_6"/>
<dbReference type="OrthoDB" id="9805579at2"/>
<dbReference type="Proteomes" id="UP000000247">
    <property type="component" value="Chromosome"/>
</dbReference>
<dbReference type="GO" id="GO:0031522">
    <property type="term" value="C:cell envelope Sec protein transport complex"/>
    <property type="evidence" value="ECO:0007669"/>
    <property type="project" value="TreeGrafter"/>
</dbReference>
<dbReference type="GO" id="GO:0005829">
    <property type="term" value="C:cytosol"/>
    <property type="evidence" value="ECO:0007669"/>
    <property type="project" value="TreeGrafter"/>
</dbReference>
<dbReference type="GO" id="GO:0005886">
    <property type="term" value="C:plasma membrane"/>
    <property type="evidence" value="ECO:0007669"/>
    <property type="project" value="UniProtKB-SubCell"/>
</dbReference>
<dbReference type="GO" id="GO:0005524">
    <property type="term" value="F:ATP binding"/>
    <property type="evidence" value="ECO:0007669"/>
    <property type="project" value="UniProtKB-UniRule"/>
</dbReference>
<dbReference type="GO" id="GO:0046872">
    <property type="term" value="F:metal ion binding"/>
    <property type="evidence" value="ECO:0007669"/>
    <property type="project" value="UniProtKB-KW"/>
</dbReference>
<dbReference type="GO" id="GO:0008564">
    <property type="term" value="F:protein-exporting ATPase activity"/>
    <property type="evidence" value="ECO:0007669"/>
    <property type="project" value="UniProtKB-EC"/>
</dbReference>
<dbReference type="GO" id="GO:0065002">
    <property type="term" value="P:intracellular protein transmembrane transport"/>
    <property type="evidence" value="ECO:0007669"/>
    <property type="project" value="UniProtKB-UniRule"/>
</dbReference>
<dbReference type="GO" id="GO:0017038">
    <property type="term" value="P:protein import"/>
    <property type="evidence" value="ECO:0007669"/>
    <property type="project" value="InterPro"/>
</dbReference>
<dbReference type="GO" id="GO:0006605">
    <property type="term" value="P:protein targeting"/>
    <property type="evidence" value="ECO:0007669"/>
    <property type="project" value="UniProtKB-UniRule"/>
</dbReference>
<dbReference type="GO" id="GO:0043952">
    <property type="term" value="P:protein transport by the Sec complex"/>
    <property type="evidence" value="ECO:0007669"/>
    <property type="project" value="TreeGrafter"/>
</dbReference>
<dbReference type="CDD" id="cd17928">
    <property type="entry name" value="DEXDc_SecA"/>
    <property type="match status" value="1"/>
</dbReference>
<dbReference type="CDD" id="cd18803">
    <property type="entry name" value="SF2_C_secA"/>
    <property type="match status" value="1"/>
</dbReference>
<dbReference type="FunFam" id="3.40.50.300:FF:000113">
    <property type="entry name" value="Preprotein translocase subunit SecA"/>
    <property type="match status" value="1"/>
</dbReference>
<dbReference type="FunFam" id="3.90.1440.10:FF:000001">
    <property type="entry name" value="Preprotein translocase subunit SecA"/>
    <property type="match status" value="1"/>
</dbReference>
<dbReference type="FunFam" id="1.10.3060.10:FF:000003">
    <property type="entry name" value="Protein translocase subunit SecA"/>
    <property type="match status" value="1"/>
</dbReference>
<dbReference type="Gene3D" id="1.10.3060.10">
    <property type="entry name" value="Helical scaffold and wing domains of SecA"/>
    <property type="match status" value="1"/>
</dbReference>
<dbReference type="Gene3D" id="3.40.50.300">
    <property type="entry name" value="P-loop containing nucleotide triphosphate hydrolases"/>
    <property type="match status" value="2"/>
</dbReference>
<dbReference type="Gene3D" id="3.90.1440.10">
    <property type="entry name" value="SecA, preprotein cross-linking domain"/>
    <property type="match status" value="1"/>
</dbReference>
<dbReference type="HAMAP" id="MF_01382">
    <property type="entry name" value="SecA"/>
    <property type="match status" value="1"/>
</dbReference>
<dbReference type="InterPro" id="IPR014001">
    <property type="entry name" value="Helicase_ATP-bd"/>
</dbReference>
<dbReference type="InterPro" id="IPR001650">
    <property type="entry name" value="Helicase_C-like"/>
</dbReference>
<dbReference type="InterPro" id="IPR027417">
    <property type="entry name" value="P-loop_NTPase"/>
</dbReference>
<dbReference type="InterPro" id="IPR004027">
    <property type="entry name" value="SEC_C_motif"/>
</dbReference>
<dbReference type="InterPro" id="IPR000185">
    <property type="entry name" value="SecA"/>
</dbReference>
<dbReference type="InterPro" id="IPR020937">
    <property type="entry name" value="SecA_CS"/>
</dbReference>
<dbReference type="InterPro" id="IPR011115">
    <property type="entry name" value="SecA_DEAD"/>
</dbReference>
<dbReference type="InterPro" id="IPR014018">
    <property type="entry name" value="SecA_motor_DEAD"/>
</dbReference>
<dbReference type="InterPro" id="IPR011130">
    <property type="entry name" value="SecA_preprotein_X-link_dom"/>
</dbReference>
<dbReference type="InterPro" id="IPR044722">
    <property type="entry name" value="SecA_SF2_C"/>
</dbReference>
<dbReference type="InterPro" id="IPR011116">
    <property type="entry name" value="SecA_Wing/Scaffold"/>
</dbReference>
<dbReference type="InterPro" id="IPR036266">
    <property type="entry name" value="SecA_Wing/Scaffold_sf"/>
</dbReference>
<dbReference type="InterPro" id="IPR036670">
    <property type="entry name" value="SecA_X-link_sf"/>
</dbReference>
<dbReference type="NCBIfam" id="NF006630">
    <property type="entry name" value="PRK09200.1"/>
    <property type="match status" value="1"/>
</dbReference>
<dbReference type="NCBIfam" id="NF009538">
    <property type="entry name" value="PRK12904.1"/>
    <property type="match status" value="1"/>
</dbReference>
<dbReference type="NCBIfam" id="TIGR00963">
    <property type="entry name" value="secA"/>
    <property type="match status" value="1"/>
</dbReference>
<dbReference type="PANTHER" id="PTHR30612:SF0">
    <property type="entry name" value="CHLOROPLAST PROTEIN-TRANSPORTING ATPASE"/>
    <property type="match status" value="1"/>
</dbReference>
<dbReference type="PANTHER" id="PTHR30612">
    <property type="entry name" value="SECA INNER MEMBRANE COMPONENT OF SEC PROTEIN SECRETION SYSTEM"/>
    <property type="match status" value="1"/>
</dbReference>
<dbReference type="Pfam" id="PF21090">
    <property type="entry name" value="P-loop_SecA"/>
    <property type="match status" value="1"/>
</dbReference>
<dbReference type="Pfam" id="PF02810">
    <property type="entry name" value="SEC-C"/>
    <property type="match status" value="1"/>
</dbReference>
<dbReference type="Pfam" id="PF07517">
    <property type="entry name" value="SecA_DEAD"/>
    <property type="match status" value="1"/>
</dbReference>
<dbReference type="Pfam" id="PF01043">
    <property type="entry name" value="SecA_PP_bind"/>
    <property type="match status" value="1"/>
</dbReference>
<dbReference type="Pfam" id="PF07516">
    <property type="entry name" value="SecA_SW"/>
    <property type="match status" value="1"/>
</dbReference>
<dbReference type="PRINTS" id="PR00906">
    <property type="entry name" value="SECA"/>
</dbReference>
<dbReference type="SMART" id="SM00957">
    <property type="entry name" value="SecA_DEAD"/>
    <property type="match status" value="1"/>
</dbReference>
<dbReference type="SMART" id="SM00958">
    <property type="entry name" value="SecA_PP_bind"/>
    <property type="match status" value="1"/>
</dbReference>
<dbReference type="SUPFAM" id="SSF81886">
    <property type="entry name" value="Helical scaffold and wing domains of SecA"/>
    <property type="match status" value="1"/>
</dbReference>
<dbReference type="SUPFAM" id="SSF52540">
    <property type="entry name" value="P-loop containing nucleoside triphosphate hydrolases"/>
    <property type="match status" value="2"/>
</dbReference>
<dbReference type="SUPFAM" id="SSF81767">
    <property type="entry name" value="Pre-protein crosslinking domain of SecA"/>
    <property type="match status" value="1"/>
</dbReference>
<dbReference type="PROSITE" id="PS01312">
    <property type="entry name" value="SECA"/>
    <property type="match status" value="1"/>
</dbReference>
<dbReference type="PROSITE" id="PS51196">
    <property type="entry name" value="SECA_MOTOR_DEAD"/>
    <property type="match status" value="1"/>
</dbReference>
<feature type="chain" id="PRO_0000321031" description="Protein translocase subunit SecA">
    <location>
        <begin position="1"/>
        <end position="897"/>
    </location>
</feature>
<feature type="region of interest" description="Disordered" evidence="3">
    <location>
        <begin position="839"/>
        <end position="897"/>
    </location>
</feature>
<feature type="compositionally biased region" description="Polar residues" evidence="3">
    <location>
        <begin position="839"/>
        <end position="856"/>
    </location>
</feature>
<feature type="compositionally biased region" description="Low complexity" evidence="3">
    <location>
        <begin position="857"/>
        <end position="870"/>
    </location>
</feature>
<feature type="binding site" evidence="2">
    <location>
        <position position="89"/>
    </location>
    <ligand>
        <name>ATP</name>
        <dbReference type="ChEBI" id="CHEBI:30616"/>
    </ligand>
</feature>
<feature type="binding site" evidence="2">
    <location>
        <begin position="107"/>
        <end position="111"/>
    </location>
    <ligand>
        <name>ATP</name>
        <dbReference type="ChEBI" id="CHEBI:30616"/>
    </ligand>
</feature>
<feature type="binding site" evidence="2">
    <location>
        <position position="517"/>
    </location>
    <ligand>
        <name>ATP</name>
        <dbReference type="ChEBI" id="CHEBI:30616"/>
    </ligand>
</feature>
<feature type="binding site" evidence="2">
    <location>
        <position position="884"/>
    </location>
    <ligand>
        <name>Zn(2+)</name>
        <dbReference type="ChEBI" id="CHEBI:29105"/>
    </ligand>
</feature>
<feature type="binding site" evidence="2">
    <location>
        <position position="886"/>
    </location>
    <ligand>
        <name>Zn(2+)</name>
        <dbReference type="ChEBI" id="CHEBI:29105"/>
    </ligand>
</feature>
<feature type="binding site" evidence="2">
    <location>
        <position position="895"/>
    </location>
    <ligand>
        <name>Zn(2+)</name>
        <dbReference type="ChEBI" id="CHEBI:29105"/>
    </ligand>
</feature>
<feature type="binding site" evidence="2">
    <location>
        <position position="896"/>
    </location>
    <ligand>
        <name>Zn(2+)</name>
        <dbReference type="ChEBI" id="CHEBI:29105"/>
    </ligand>
</feature>
<name>SECA_VESOH</name>
<sequence>MSIINNILSKIVGSRNDRLIKVLYKTVNQITELESNMQALSDEQLKSKTQEFKDRLNKKETLNSILIEAFAVIREASIRVLDLRHHDVQLIGGIVLNNGNIAEMGTGEGKTLVATLPAYLNALNGKGVHIVTVNDYLAFRDAQWMGKVFNFLSMSVGIITSNMSYENKQVAYLCDIVYATNNELGFDYLRDNMAFTSEQKVQRMLNFAIVDEVDSILIDEARTPLIISGPTDDYAQIYQAINHMIPHFTKQIESGAGKEIVIEVAGDYTVDEKHKQVFLTDNGHGKAERLLIDAGALLEGVSLYDASNILLMQHINSALRAHILFQKNVDYIIQNDEVVIVDEFTGRTMLGRRWSEGLHQAIEAKERVSIKKENQTLASITFQNYFRLYRTLSGMTGTADTEAVEFQDIYGLETVVVPPNKPSTRVDKSDLIYLTTQEKFKAIALEVANCQKTGQPVLVGTSSIENSELISTLLEKNNIKHEVLNAKQHEREAIIIANAGSIGAVTIATNMAGRGTDIVLGGKLLEQATNKQKIDWQNRHDDVIKAGGLHIVGTERNESRRVDNQLRGRSARQGDVGSTRFYLSLEDNLMRIFASEKMSSTMQKLGMKKGESIEHKMVNRAIENAQRKVEGMNYDARKHLLEYDDVANDQRKVIYQLRDDLMSVNDVQDRFISIREKVIKQLFSDYISAELMEEDWNVEGFYNALKSDYSVDLPLQQWLNKGVDIDELQSRIIQGMSTICDYKEETVGTKPMREFEKAVMLKTIDHYWKEHLATMDYLRQSVNLRGYAQKNPMQEYKRESFAMFTSLLDTINIEIVKSLSNVTINENTDILDVEQQNNDDAQATHSNPNEQTKQASITNNIQTQTDQQNTYQRKEKKVGRNEPCPCGSGKKYKKCHG</sequence>
<comment type="function">
    <text evidence="1">Part of the Sec protein translocase complex. Interacts with the SecYEG preprotein conducting channel. Has a central role in coupling the hydrolysis of ATP to the transfer of proteins into and across the cell membrane, serving as an ATP-driven molecular motor driving the stepwise translocation of polypeptide chains across the membrane.</text>
</comment>
<comment type="catalytic activity">
    <reaction evidence="2">
        <text>ATP + H2O + cellular proteinSide 1 = ADP + phosphate + cellular proteinSide 2.</text>
        <dbReference type="EC" id="7.4.2.8"/>
    </reaction>
</comment>
<comment type="cofactor">
    <cofactor evidence="2 4">
        <name>Zn(2+)</name>
        <dbReference type="ChEBI" id="CHEBI:29105"/>
    </cofactor>
    <text evidence="2 4">May bind 1 zinc ion per subunit.</text>
</comment>
<comment type="subunit">
    <text evidence="2">Monomer and homodimer. Part of the essential Sec protein translocation apparatus which comprises SecA, SecYEG and auxiliary proteins SecDF-YajC and YidC.</text>
</comment>
<comment type="subcellular location">
    <subcellularLocation>
        <location evidence="2">Cell inner membrane</location>
        <topology evidence="2">Peripheral membrane protein</topology>
        <orientation evidence="2">Cytoplasmic side</orientation>
    </subcellularLocation>
    <subcellularLocation>
        <location evidence="2">Cytoplasm</location>
    </subcellularLocation>
    <text evidence="2">Distribution is 50-50.</text>
</comment>
<comment type="similarity">
    <text evidence="2 4">Belongs to the SecA family.</text>
</comment>